<dbReference type="EMBL" id="AC164640">
    <property type="status" value="NOT_ANNOTATED_CDS"/>
    <property type="molecule type" value="Genomic_DNA"/>
</dbReference>
<dbReference type="EMBL" id="AC166079">
    <property type="status" value="NOT_ANNOTATED_CDS"/>
    <property type="molecule type" value="Genomic_DNA"/>
</dbReference>
<dbReference type="EMBL" id="CH466593">
    <property type="protein sequence ID" value="EDL24066.1"/>
    <property type="molecule type" value="Genomic_DNA"/>
</dbReference>
<dbReference type="CCDS" id="CCDS39871.1"/>
<dbReference type="RefSeq" id="NP_001074497.1">
    <property type="nucleotide sequence ID" value="NM_001081028.1"/>
</dbReference>
<dbReference type="RefSeq" id="XP_011249034.1">
    <property type="nucleotide sequence ID" value="XM_011250732.4"/>
</dbReference>
<dbReference type="SMR" id="G3X9J0"/>
<dbReference type="FunCoup" id="G3X9J0">
    <property type="interactions" value="1126"/>
</dbReference>
<dbReference type="IntAct" id="G3X9J0">
    <property type="interactions" value="1"/>
</dbReference>
<dbReference type="STRING" id="10090.ENSMUSP00000082965"/>
<dbReference type="GlyGen" id="G3X9J0">
    <property type="glycosylation" value="6 sites, 1 N-linked glycan (1 site), 1 O-linked glycan (2 sites)"/>
</dbReference>
<dbReference type="iPTMnet" id="G3X9J0"/>
<dbReference type="PhosphoSitePlus" id="G3X9J0"/>
<dbReference type="jPOST" id="G3X9J0"/>
<dbReference type="PaxDb" id="10090-ENSMUSP00000082965"/>
<dbReference type="PeptideAtlas" id="G3X9J0"/>
<dbReference type="ProteomicsDB" id="261228"/>
<dbReference type="Pumba" id="G3X9J0"/>
<dbReference type="Antibodypedia" id="59222">
    <property type="antibodies" value="66 antibodies from 20 providers"/>
</dbReference>
<dbReference type="DNASU" id="74206"/>
<dbReference type="Ensembl" id="ENSMUST00000085809.11">
    <property type="protein sequence ID" value="ENSMUSP00000082965.5"/>
    <property type="gene ID" value="ENSMUSG00000030583.17"/>
</dbReference>
<dbReference type="Ensembl" id="ENSMUST00000183096.8">
    <property type="protein sequence ID" value="ENSMUSP00000138171.2"/>
    <property type="gene ID" value="ENSMUSG00000030583.17"/>
</dbReference>
<dbReference type="GeneID" id="74206"/>
<dbReference type="KEGG" id="mmu:74206"/>
<dbReference type="UCSC" id="uc009gbs.1">
    <property type="organism name" value="mouse"/>
</dbReference>
<dbReference type="AGR" id="MGI:1921456"/>
<dbReference type="CTD" id="23094"/>
<dbReference type="MGI" id="MGI:1921456">
    <property type="gene designation" value="Sipa1l3"/>
</dbReference>
<dbReference type="VEuPathDB" id="HostDB:ENSMUSG00000030583"/>
<dbReference type="eggNOG" id="KOG3686">
    <property type="taxonomic scope" value="Eukaryota"/>
</dbReference>
<dbReference type="GeneTree" id="ENSGT00940000159183"/>
<dbReference type="HOGENOM" id="CLU_002127_0_0_1"/>
<dbReference type="InParanoid" id="G3X9J0"/>
<dbReference type="OMA" id="EDMGEPR"/>
<dbReference type="OrthoDB" id="2499658at2759"/>
<dbReference type="PhylomeDB" id="G3X9J0"/>
<dbReference type="TreeFam" id="TF318626"/>
<dbReference type="BioGRID-ORCS" id="74206">
    <property type="hits" value="4 hits in 77 CRISPR screens"/>
</dbReference>
<dbReference type="PRO" id="PR:G3X9J0"/>
<dbReference type="Proteomes" id="UP000000589">
    <property type="component" value="Chromosome 7"/>
</dbReference>
<dbReference type="RNAct" id="G3X9J0">
    <property type="molecule type" value="protein"/>
</dbReference>
<dbReference type="Bgee" id="ENSMUSG00000030583">
    <property type="expression patterns" value="Expressed in epithelium of small intestine and 220 other cell types or tissues"/>
</dbReference>
<dbReference type="ExpressionAtlas" id="G3X9J0">
    <property type="expression patterns" value="baseline and differential"/>
</dbReference>
<dbReference type="GO" id="GO:0045177">
    <property type="term" value="C:apical part of cell"/>
    <property type="evidence" value="ECO:0000250"/>
    <property type="project" value="UniProtKB"/>
</dbReference>
<dbReference type="GO" id="GO:0016324">
    <property type="term" value="C:apical plasma membrane"/>
    <property type="evidence" value="ECO:0007669"/>
    <property type="project" value="UniProtKB-SubCell"/>
</dbReference>
<dbReference type="GO" id="GO:0098978">
    <property type="term" value="C:glutamatergic synapse"/>
    <property type="evidence" value="ECO:0007669"/>
    <property type="project" value="Ensembl"/>
</dbReference>
<dbReference type="GO" id="GO:0005794">
    <property type="term" value="C:Golgi apparatus"/>
    <property type="evidence" value="ECO:0007669"/>
    <property type="project" value="Ensembl"/>
</dbReference>
<dbReference type="GO" id="GO:0005654">
    <property type="term" value="C:nucleoplasm"/>
    <property type="evidence" value="ECO:0007669"/>
    <property type="project" value="Ensembl"/>
</dbReference>
<dbReference type="GO" id="GO:0099091">
    <property type="term" value="C:postsynaptic specialization, intracellular component"/>
    <property type="evidence" value="ECO:0007669"/>
    <property type="project" value="Ensembl"/>
</dbReference>
<dbReference type="GO" id="GO:0001725">
    <property type="term" value="C:stress fiber"/>
    <property type="evidence" value="ECO:0000250"/>
    <property type="project" value="UniProtKB"/>
</dbReference>
<dbReference type="GO" id="GO:0061689">
    <property type="term" value="C:tricellular tight junction"/>
    <property type="evidence" value="ECO:0000250"/>
    <property type="project" value="UniProtKB"/>
</dbReference>
<dbReference type="GO" id="GO:0005096">
    <property type="term" value="F:GTPase activator activity"/>
    <property type="evidence" value="ECO:0007669"/>
    <property type="project" value="UniProtKB-KW"/>
</dbReference>
<dbReference type="GO" id="GO:0007010">
    <property type="term" value="P:cytoskeleton organization"/>
    <property type="evidence" value="ECO:0000315"/>
    <property type="project" value="UniProtKB"/>
</dbReference>
<dbReference type="GO" id="GO:0003382">
    <property type="term" value="P:epithelial cell morphogenesis"/>
    <property type="evidence" value="ECO:0000315"/>
    <property type="project" value="UniProtKB"/>
</dbReference>
<dbReference type="GO" id="GO:0090162">
    <property type="term" value="P:establishment of epithelial cell polarity"/>
    <property type="evidence" value="ECO:0000315"/>
    <property type="project" value="UniProtKB"/>
</dbReference>
<dbReference type="GO" id="GO:0001654">
    <property type="term" value="P:eye development"/>
    <property type="evidence" value="ECO:0000315"/>
    <property type="project" value="UniProtKB"/>
</dbReference>
<dbReference type="GO" id="GO:0002244">
    <property type="term" value="P:hematopoietic progenitor cell differentiation"/>
    <property type="evidence" value="ECO:0000315"/>
    <property type="project" value="MGI"/>
</dbReference>
<dbReference type="GO" id="GO:0051056">
    <property type="term" value="P:regulation of small GTPase mediated signal transduction"/>
    <property type="evidence" value="ECO:0007669"/>
    <property type="project" value="InterPro"/>
</dbReference>
<dbReference type="CDD" id="cd06745">
    <property type="entry name" value="PDZ_SIPA1-like"/>
    <property type="match status" value="1"/>
</dbReference>
<dbReference type="FunFam" id="3.40.50.11210:FF:000002">
    <property type="entry name" value="Signal-induced proliferation-associated 1-like protein 1"/>
    <property type="match status" value="1"/>
</dbReference>
<dbReference type="Gene3D" id="2.30.42.10">
    <property type="match status" value="1"/>
</dbReference>
<dbReference type="Gene3D" id="6.10.140.210">
    <property type="match status" value="1"/>
</dbReference>
<dbReference type="Gene3D" id="3.40.50.11210">
    <property type="entry name" value="Rap/Ran-GAP"/>
    <property type="match status" value="1"/>
</dbReference>
<dbReference type="InterPro" id="IPR001478">
    <property type="entry name" value="PDZ"/>
</dbReference>
<dbReference type="InterPro" id="IPR036034">
    <property type="entry name" value="PDZ_sf"/>
</dbReference>
<dbReference type="InterPro" id="IPR035974">
    <property type="entry name" value="Rap/Ran-GAP_sf"/>
</dbReference>
<dbReference type="InterPro" id="IPR000331">
    <property type="entry name" value="Rap/Ran_GAP_dom"/>
</dbReference>
<dbReference type="InterPro" id="IPR050989">
    <property type="entry name" value="Rap1_Ran_GAP"/>
</dbReference>
<dbReference type="InterPro" id="IPR021818">
    <property type="entry name" value="SIPA1L_C"/>
</dbReference>
<dbReference type="PANTHER" id="PTHR15711">
    <property type="entry name" value="RAP GTPASE-ACTIVATING PROTEIN"/>
    <property type="match status" value="1"/>
</dbReference>
<dbReference type="PANTHER" id="PTHR15711:SF15">
    <property type="entry name" value="SIGNAL-INDUCED PROLIFERATION-ASSOCIATED 1-LIKE PROTEIN 3"/>
    <property type="match status" value="1"/>
</dbReference>
<dbReference type="Pfam" id="PF21022">
    <property type="entry name" value="Rap-GAP_dimer"/>
    <property type="match status" value="1"/>
</dbReference>
<dbReference type="Pfam" id="PF02145">
    <property type="entry name" value="Rap_GAP"/>
    <property type="match status" value="1"/>
</dbReference>
<dbReference type="Pfam" id="PF11881">
    <property type="entry name" value="SPAR_C"/>
    <property type="match status" value="1"/>
</dbReference>
<dbReference type="SMART" id="SM00228">
    <property type="entry name" value="PDZ"/>
    <property type="match status" value="1"/>
</dbReference>
<dbReference type="SUPFAM" id="SSF50156">
    <property type="entry name" value="PDZ domain-like"/>
    <property type="match status" value="1"/>
</dbReference>
<dbReference type="SUPFAM" id="SSF111347">
    <property type="entry name" value="Rap/Ran-GAP"/>
    <property type="match status" value="1"/>
</dbReference>
<dbReference type="PROSITE" id="PS50106">
    <property type="entry name" value="PDZ"/>
    <property type="match status" value="1"/>
</dbReference>
<dbReference type="PROSITE" id="PS50085">
    <property type="entry name" value="RAPGAP"/>
    <property type="match status" value="1"/>
</dbReference>
<sequence length="1776" mass="195063">MTTYRPLPNDGVDLAASCGARSTDILPGPHPGDYTPMGFWAQNGSMPQPLGESPAATTTRPSPTTPAMPKMGVRARVADWPPKRDALREQSNPSPSQDTDGVKTTKVAHSMRNLQNGQLPSSTPASSGSRAFHRLSRRRSKDVEFQDGWPRSPGRAFLPLRHRSSSEITLSECDVEEPGDPRGTRHPGVLPLFREYGSTSSIDVQGVPEQSFFDILNEFRSEQPEARGSQNLRELLQVDPGALSGGSCGTKGDPRNGQPTKDSLQSLQPLKEKEKSRKKPVRGLGSGDTVDSSIFRKLRSSKPEGEVGRPLGETEESRSPPEASRPWVCQKSFAHFDVQSMLFDLNEAAANRVSVAQRRNTTTGASAASAASAMVTLTASRAHSLGTLDPAFTSTEDLNCKENLEQDLGDDNSNDLLLSCPHFRNEIGGERERNVSFSRASVGSPGGSSEAHMAEPTLSTHRTNASISVLEVPKEQQRTQSRPRQYSIEHVDLGARYYQDYFVGKEHANYFGVDEKLGPVAVSIKREKLEDHKDHGPQYQYRIIFRTRELITLRGSILEDATPTATKHGTGRGLPLKDALEYVIPELNIHCLRLALNTPKVTEQLLKLDEQGLCRKHKVGILYCKAGQSSEEEMYNNEEAGPAFEEFLDLLGDKVCLKGFTKYAAQLDVKTDSTGTHSLYTTYQDYEIMFHVSTLLPYTPNNRQQLLRKRHIGNDIVTIIFQEPGALPFTPKNIRSHFQHVFIIVRVHNPCTENVCYSMAVTRSKDAPPFGPPIPNGTTFRKSDVFRDFLLAKVINAENAAHKSDKFHTMATRTRQEYLKDLAENCVSNTPIDSSGKFNLISLTSKKKEKTKARAGAEQHSAGAIAWRVAAQDYAQGSEIDCILGISNEFVVLLDLRTKEVVFNCYCGDVIGWTPDSSTIKIFYGRGDHIFLQAAEGSVEDIRDIVQRLKVMTNGWETVDMTLRRNGLGQLGFHVKYDGTVAEVEDYGFAWQAGLRQGSRLVEICKVAVVTLSHDQMIDLLRTSVTVKVVIIPPFEDGTPRRGWPETYDMNASEPKTESETTTPGGRPPYRSNAPWQWSGPASHNSLPATKWTTPATPGHAQSLSRLPKQTPVVPFRESQPLHSKRPVSFPETPFAASPAGADRVPPYRQPSGSFSTPGSATYARYKPSPERYAAAPHPLLSFDPHFMHDGMSSGDSSSGGLTSQESTMERPKPEPLWHVPAQARLSAMTGSIGSKHPSRQDAAGKDSPNRHSKGEPQYSSHSSSNTLSSNASSSHSDDRWFDPLDPLEPEQDPFSKGGSSDSGIDTTLYTSSPSCMSLAKAPRPTKPHKPPGNIGLCGGGRESAGRPHPVDRRREVSPAPVVAGQNKGYRPKLYSSGSCTPPGLVGGSRDPPRQPSDMGSRAGYPTQVYKTASAETPRPSQLSQCSPFQLSTSVPKSFFSKQPAHNKHSTGWKRTDEPPPRPLPFTDSKKQVDTNAKNVFGQPRLRASLRDLRSPRKNYKSTIEDDLKKLIVMDNLGPEQERDTGQSPQKSLQRTLSDESLCSGRREPSFASPASLEPGLPSDVLFTSTCTFPSSTLPARRQHQHAHPPSGAPSTTPATGNGFPEKKSAISASELSLADGRDRPLRRLDPGMMPLPDTAAGLEWSSLVNAAKAYEVQRAVSLFSLNDPALSPEIPPAHSPVHSHLSLERGPQTPRATPTMSEESPLDLTGKVYQLEVMLKQLHTDLQKEKQDKVVLQSEVASLRQNNQRLQEESQAASEQLRKFAELFSREKKEL</sequence>
<organism>
    <name type="scientific">Mus musculus</name>
    <name type="common">Mouse</name>
    <dbReference type="NCBI Taxonomy" id="10090"/>
    <lineage>
        <taxon>Eukaryota</taxon>
        <taxon>Metazoa</taxon>
        <taxon>Chordata</taxon>
        <taxon>Craniata</taxon>
        <taxon>Vertebrata</taxon>
        <taxon>Euteleostomi</taxon>
        <taxon>Mammalia</taxon>
        <taxon>Eutheria</taxon>
        <taxon>Euarchontoglires</taxon>
        <taxon>Glires</taxon>
        <taxon>Rodentia</taxon>
        <taxon>Myomorpha</taxon>
        <taxon>Muroidea</taxon>
        <taxon>Muridae</taxon>
        <taxon>Murinae</taxon>
        <taxon>Mus</taxon>
        <taxon>Mus</taxon>
    </lineage>
</organism>
<proteinExistence type="evidence at protein level"/>
<keyword id="KW-0007">Acetylation</keyword>
<keyword id="KW-1003">Cell membrane</keyword>
<keyword id="KW-0175">Coiled coil</keyword>
<keyword id="KW-0343">GTPase activation</keyword>
<keyword id="KW-0472">Membrane</keyword>
<keyword id="KW-0597">Phosphoprotein</keyword>
<keyword id="KW-1185">Reference proteome</keyword>
<comment type="function">
    <text evidence="6">Plays a critical role in epithelial cell morphogenesis, polarity, adhesion and cytoskeletal organization in the lens (PubMed:26231217).</text>
</comment>
<comment type="subcellular location">
    <subcellularLocation>
        <location evidence="1">Apical cell membrane</location>
    </subcellularLocation>
    <text evidence="1">Detected in tricellular junctions. Colocalizes with apical F-actin.</text>
</comment>
<comment type="developmental stage">
    <text evidence="6">Expressed in the developing lens.</text>
</comment>
<comment type="disruption phenotype">
    <text evidence="6">Deficient mice at 4 weeks postnatal age show reduced lens size and microphthalmia (PubMed:26231217).</text>
</comment>
<protein>
    <recommendedName>
        <fullName>Signal-induced proliferation-associated 1-like protein 3</fullName>
        <shortName>SIPA1-like protein 3</shortName>
    </recommendedName>
    <alternativeName>
        <fullName>SPA-1-like protein 3</fullName>
    </alternativeName>
</protein>
<evidence type="ECO:0000250" key="1">
    <source>
        <dbReference type="UniProtKB" id="O60292"/>
    </source>
</evidence>
<evidence type="ECO:0000255" key="2"/>
<evidence type="ECO:0000255" key="3">
    <source>
        <dbReference type="PROSITE-ProRule" id="PRU00143"/>
    </source>
</evidence>
<evidence type="ECO:0000255" key="4">
    <source>
        <dbReference type="PROSITE-ProRule" id="PRU00165"/>
    </source>
</evidence>
<evidence type="ECO:0000256" key="5">
    <source>
        <dbReference type="SAM" id="MobiDB-lite"/>
    </source>
</evidence>
<evidence type="ECO:0000269" key="6">
    <source>
    </source>
</evidence>
<evidence type="ECO:0007744" key="7">
    <source>
    </source>
</evidence>
<evidence type="ECO:0007744" key="8">
    <source>
    </source>
</evidence>
<name>SI1L3_MOUSE</name>
<feature type="chain" id="PRO_0000435476" description="Signal-induced proliferation-associated 1-like protein 3">
    <location>
        <begin position="1"/>
        <end position="1776"/>
    </location>
</feature>
<feature type="domain" description="Rap-GAP" evidence="4">
    <location>
        <begin position="605"/>
        <end position="822"/>
    </location>
</feature>
<feature type="domain" description="PDZ" evidence="3">
    <location>
        <begin position="960"/>
        <end position="1024"/>
    </location>
</feature>
<feature type="region of interest" description="Disordered" evidence="5">
    <location>
        <begin position="41"/>
        <end position="157"/>
    </location>
</feature>
<feature type="region of interest" description="Disordered" evidence="5">
    <location>
        <begin position="240"/>
        <end position="325"/>
    </location>
</feature>
<feature type="region of interest" description="Disordered" evidence="5">
    <location>
        <begin position="438"/>
        <end position="461"/>
    </location>
</feature>
<feature type="region of interest" description="Disordered" evidence="5">
    <location>
        <begin position="1040"/>
        <end position="1104"/>
    </location>
</feature>
<feature type="region of interest" description="Disordered" evidence="5">
    <location>
        <begin position="1117"/>
        <end position="1164"/>
    </location>
</feature>
<feature type="region of interest" description="Disordered" evidence="5">
    <location>
        <begin position="1184"/>
        <end position="1632"/>
    </location>
</feature>
<feature type="region of interest" description="Disordered" evidence="5">
    <location>
        <begin position="1678"/>
        <end position="1705"/>
    </location>
</feature>
<feature type="coiled-coil region" evidence="2">
    <location>
        <begin position="1715"/>
        <end position="1769"/>
    </location>
</feature>
<feature type="compositionally biased region" description="Low complexity" evidence="5">
    <location>
        <begin position="54"/>
        <end position="69"/>
    </location>
</feature>
<feature type="compositionally biased region" description="Polar residues" evidence="5">
    <location>
        <begin position="89"/>
        <end position="99"/>
    </location>
</feature>
<feature type="compositionally biased region" description="Polar residues" evidence="5">
    <location>
        <begin position="112"/>
        <end position="129"/>
    </location>
</feature>
<feature type="compositionally biased region" description="Basic residues" evidence="5">
    <location>
        <begin position="131"/>
        <end position="140"/>
    </location>
</feature>
<feature type="compositionally biased region" description="Polar residues" evidence="5">
    <location>
        <begin position="257"/>
        <end position="268"/>
    </location>
</feature>
<feature type="compositionally biased region" description="Polar residues" evidence="5">
    <location>
        <begin position="1074"/>
        <end position="1104"/>
    </location>
</feature>
<feature type="compositionally biased region" description="Polar residues" evidence="5">
    <location>
        <begin position="1151"/>
        <end position="1160"/>
    </location>
</feature>
<feature type="compositionally biased region" description="Low complexity" evidence="5">
    <location>
        <begin position="1190"/>
        <end position="1201"/>
    </location>
</feature>
<feature type="compositionally biased region" description="Basic and acidic residues" evidence="5">
    <location>
        <begin position="1239"/>
        <end position="1255"/>
    </location>
</feature>
<feature type="compositionally biased region" description="Low complexity" evidence="5">
    <location>
        <begin position="1260"/>
        <end position="1275"/>
    </location>
</feature>
<feature type="compositionally biased region" description="Polar residues" evidence="5">
    <location>
        <begin position="1298"/>
        <end position="1316"/>
    </location>
</feature>
<feature type="compositionally biased region" description="Basic and acidic residues" evidence="5">
    <location>
        <begin position="1344"/>
        <end position="1357"/>
    </location>
</feature>
<feature type="compositionally biased region" description="Polar residues" evidence="5">
    <location>
        <begin position="1409"/>
        <end position="1436"/>
    </location>
</feature>
<feature type="compositionally biased region" description="Basic and acidic residues" evidence="5">
    <location>
        <begin position="1503"/>
        <end position="1512"/>
    </location>
</feature>
<feature type="compositionally biased region" description="Polar residues" evidence="5">
    <location>
        <begin position="1526"/>
        <end position="1541"/>
    </location>
</feature>
<feature type="compositionally biased region" description="Polar residues" evidence="5">
    <location>
        <begin position="1566"/>
        <end position="1578"/>
    </location>
</feature>
<feature type="compositionally biased region" description="Low complexity" evidence="5">
    <location>
        <begin position="1589"/>
        <end position="1601"/>
    </location>
</feature>
<feature type="compositionally biased region" description="Basic and acidic residues" evidence="5">
    <location>
        <begin position="1620"/>
        <end position="1630"/>
    </location>
</feature>
<feature type="modified residue" description="Phosphoserine" evidence="8">
    <location>
        <position position="94"/>
    </location>
</feature>
<feature type="modified residue" description="Phosphoserine" evidence="8">
    <location>
        <position position="140"/>
    </location>
</feature>
<feature type="modified residue" description="Phosphoserine" evidence="1">
    <location>
        <position position="394"/>
    </location>
</feature>
<feature type="modified residue" description="Phosphoserine" evidence="8">
    <location>
        <position position="1358"/>
    </location>
</feature>
<feature type="modified residue" description="Phosphothreonine" evidence="8">
    <location>
        <position position="1381"/>
    </location>
</feature>
<feature type="modified residue" description="N6-acetyllysine" evidence="1">
    <location>
        <position position="1442"/>
    </location>
</feature>
<feature type="modified residue" description="Phosphoserine" evidence="7 8">
    <location>
        <position position="1538"/>
    </location>
</feature>
<feature type="modified residue" description="Phosphoserine" evidence="8">
    <location>
        <position position="1541"/>
    </location>
</feature>
<feature type="modified residue" description="Phosphoserine" evidence="8">
    <location>
        <position position="1614"/>
    </location>
</feature>
<feature type="modified residue" description="Phosphoserine" evidence="8">
    <location>
        <position position="1617"/>
    </location>
</feature>
<feature type="modified residue" description="Phosphoserine" evidence="8">
    <location>
        <position position="1672"/>
    </location>
</feature>
<feature type="modified residue" description="Phosphothreonine" evidence="1">
    <location>
        <position position="1694"/>
    </location>
</feature>
<feature type="modified residue" description="Phosphothreonine" evidence="8">
    <location>
        <position position="1698"/>
    </location>
</feature>
<gene>
    <name type="primary">Sipa1l3</name>
    <name type="synonym">Spal3</name>
</gene>
<accession>G3X9J0</accession>
<reference key="1">
    <citation type="journal article" date="2009" name="PLoS Biol.">
        <title>Lineage-specific biology revealed by a finished genome assembly of the mouse.</title>
        <authorList>
            <person name="Church D.M."/>
            <person name="Goodstadt L."/>
            <person name="Hillier L.W."/>
            <person name="Zody M.C."/>
            <person name="Goldstein S."/>
            <person name="She X."/>
            <person name="Bult C.J."/>
            <person name="Agarwala R."/>
            <person name="Cherry J.L."/>
            <person name="DiCuccio M."/>
            <person name="Hlavina W."/>
            <person name="Kapustin Y."/>
            <person name="Meric P."/>
            <person name="Maglott D."/>
            <person name="Birtle Z."/>
            <person name="Marques A.C."/>
            <person name="Graves T."/>
            <person name="Zhou S."/>
            <person name="Teague B."/>
            <person name="Potamousis K."/>
            <person name="Churas C."/>
            <person name="Place M."/>
            <person name="Herschleb J."/>
            <person name="Runnheim R."/>
            <person name="Forrest D."/>
            <person name="Amos-Landgraf J."/>
            <person name="Schwartz D.C."/>
            <person name="Cheng Z."/>
            <person name="Lindblad-Toh K."/>
            <person name="Eichler E.E."/>
            <person name="Ponting C.P."/>
        </authorList>
    </citation>
    <scope>NUCLEOTIDE SEQUENCE [LARGE SCALE GENOMIC DNA]</scope>
    <source>
        <strain>C57BL/6J</strain>
    </source>
</reference>
<reference key="2">
    <citation type="submission" date="2005-07" db="EMBL/GenBank/DDBJ databases">
        <authorList>
            <person name="Mural R.J."/>
            <person name="Adams M.D."/>
            <person name="Myers E.W."/>
            <person name="Smith H.O."/>
            <person name="Venter J.C."/>
        </authorList>
    </citation>
    <scope>NUCLEOTIDE SEQUENCE [LARGE SCALE GENOMIC DNA]</scope>
</reference>
<reference key="3">
    <citation type="journal article" date="2005" name="Nat. Biotechnol.">
        <title>Immunoaffinity profiling of tyrosine phosphorylation in cancer cells.</title>
        <authorList>
            <person name="Rush J."/>
            <person name="Moritz A."/>
            <person name="Lee K.A."/>
            <person name="Guo A."/>
            <person name="Goss V.L."/>
            <person name="Spek E.J."/>
            <person name="Zhang H."/>
            <person name="Zha X.-M."/>
            <person name="Polakiewicz R.D."/>
            <person name="Comb M.J."/>
        </authorList>
    </citation>
    <scope>IDENTIFICATION BY MASS SPECTROMETRY [LARGE SCALE ANALYSIS]</scope>
</reference>
<reference key="4">
    <citation type="journal article" date="2009" name="Immunity">
        <title>The phagosomal proteome in interferon-gamma-activated macrophages.</title>
        <authorList>
            <person name="Trost M."/>
            <person name="English L."/>
            <person name="Lemieux S."/>
            <person name="Courcelles M."/>
            <person name="Desjardins M."/>
            <person name="Thibault P."/>
        </authorList>
    </citation>
    <scope>PHOSPHORYLATION [LARGE SCALE ANALYSIS] AT SER-1538</scope>
    <scope>IDENTIFICATION BY MASS SPECTROMETRY [LARGE SCALE ANALYSIS]</scope>
</reference>
<reference key="5">
    <citation type="journal article" date="2010" name="Cell">
        <title>A tissue-specific atlas of mouse protein phosphorylation and expression.</title>
        <authorList>
            <person name="Huttlin E.L."/>
            <person name="Jedrychowski M.P."/>
            <person name="Elias J.E."/>
            <person name="Goswami T."/>
            <person name="Rad R."/>
            <person name="Beausoleil S.A."/>
            <person name="Villen J."/>
            <person name="Haas W."/>
            <person name="Sowa M.E."/>
            <person name="Gygi S.P."/>
        </authorList>
    </citation>
    <scope>PHOSPHORYLATION [LARGE SCALE ANALYSIS] AT SER-94; SER-140; SER-1358; THR-1381; SER-1538; SER-1541; SER-1614; SER-1617; SER-1672 AND THR-1698</scope>
    <scope>IDENTIFICATION BY MASS SPECTROMETRY [LARGE SCALE ANALYSIS]</scope>
    <source>
        <tissue>Brain</tissue>
        <tissue>Kidney</tissue>
        <tissue>Lung</tissue>
        <tissue>Pancreas</tissue>
        <tissue>Spleen</tissue>
        <tissue>Testis</tissue>
    </source>
</reference>
<reference key="6">
    <citation type="journal article" date="2015" name="Hum. Mol. Genet.">
        <title>Mutations in SIPA1L3 cause eye defects through disruption of cell polarity and cytoskeleton organization.</title>
        <authorList>
            <person name="Greenlees R."/>
            <person name="Mihelec M."/>
            <person name="Yousoof S."/>
            <person name="Speidel D."/>
            <person name="Wu S.K."/>
            <person name="Rinkwitz S."/>
            <person name="Prokudin I."/>
            <person name="Perveen R."/>
            <person name="Cheng A."/>
            <person name="Ma A."/>
            <person name="Nash B."/>
            <person name="Gillespie R."/>
            <person name="Loebel D.A."/>
            <person name="Clayton-Smith J."/>
            <person name="Lloyd I.C."/>
            <person name="Grigg J.R."/>
            <person name="Tam P.P."/>
            <person name="Yap A.S."/>
            <person name="Becker T.S."/>
            <person name="Black G.C."/>
            <person name="Semina E."/>
            <person name="Jamieson R.V."/>
        </authorList>
    </citation>
    <scope>FUNCTION</scope>
    <scope>DEVELOPMENTAL STAGE</scope>
    <scope>DISRUPTION PHENOTYPE</scope>
</reference>